<keyword id="KW-0067">ATP-binding</keyword>
<keyword id="KW-1003">Cell membrane</keyword>
<keyword id="KW-0472">Membrane</keyword>
<keyword id="KW-0547">Nucleotide-binding</keyword>
<keyword id="KW-1278">Translocase</keyword>
<keyword id="KW-0813">Transport</keyword>
<evidence type="ECO:0000255" key="1"/>
<evidence type="ECO:0000255" key="2">
    <source>
        <dbReference type="HAMAP-Rule" id="MF_01710"/>
    </source>
</evidence>
<evidence type="ECO:0000269" key="3">
    <source>
    </source>
</evidence>
<evidence type="ECO:0000305" key="4">
    <source>
    </source>
</evidence>
<sequence>MNKILEVENLVFKYEKESDVNQLNGVSFSITKGEWVSIIGQNGSGKSTTARLIDGLFEEFEGIVKIDGERLTAENVWNLRRKIGMVFQNPDNQFVGATVEDDVAFGMENQGIPREEMIKRVDEALLAVNMLDFKTREPARLSGGQKQRVAVAGIIALRPEIIILDESTSMLDPTGRSEIMRVIHEIKDKYHLTVLSITHDLDEAASSDRILVMRAGEIIKEAAPSELFATSEDMVEIGLDVPFSSNLMKDLRTNGFDLPEKYLSEDELVELLADKLG</sequence>
<reference key="1">
    <citation type="journal article" date="2007" name="J. Bacteriol.">
        <title>The complete genome sequence of the lactic acid bacterial paradigm Lactococcus lactis subsp. cremoris MG1363.</title>
        <authorList>
            <person name="Wegmann U."/>
            <person name="O'Connell-Motherway M."/>
            <person name="Zomer A."/>
            <person name="Buist G."/>
            <person name="Shearman C."/>
            <person name="Canchaya C."/>
            <person name="Ventura M."/>
            <person name="Goesmann A."/>
            <person name="Gasson M.J."/>
            <person name="Kuipers O.P."/>
            <person name="van Sinderen D."/>
            <person name="Kok J."/>
        </authorList>
    </citation>
    <scope>NUCLEOTIDE SEQUENCE [LARGE SCALE GENOMIC DNA]</scope>
    <source>
        <strain>MG1363</strain>
    </source>
</reference>
<reference key="2">
    <citation type="journal article" date="2011" name="J. Biol. Chem.">
        <title>Quaternary structure and functional unit of energy coupling factor (ECF)-type transporters.</title>
        <authorList>
            <person name="ter Beek J."/>
            <person name="Duurkens R.H."/>
            <person name="Erkens G.B."/>
            <person name="Slotboom D.J."/>
        </authorList>
    </citation>
    <scope>SUBUNIT</scope>
    <scope>SUBCELLULAR LOCATION</scope>
    <scope>TRANSPORT SUBSTRATES</scope>
    <scope>EXPRESSION IN E.COLI AND L.LACTIS</scope>
    <scope>FUNCTION</scope>
    <source>
        <strain>MG1363</strain>
    </source>
</reference>
<dbReference type="EC" id="7.-.-.-" evidence="2"/>
<dbReference type="EMBL" id="AM406671">
    <property type="protein sequence ID" value="CAL96894.1"/>
    <property type="molecule type" value="Genomic_DNA"/>
</dbReference>
<dbReference type="RefSeq" id="WP_011675310.1">
    <property type="nucleotide sequence ID" value="NC_009004.1"/>
</dbReference>
<dbReference type="SMR" id="A2RI01"/>
<dbReference type="STRING" id="416870.llmg_0287"/>
<dbReference type="TCDB" id="3.A.1.25.4">
    <property type="family name" value="the atp-binding cassette (abc) superfamily"/>
</dbReference>
<dbReference type="KEGG" id="llm:llmg_0287"/>
<dbReference type="eggNOG" id="COG1122">
    <property type="taxonomic scope" value="Bacteria"/>
</dbReference>
<dbReference type="HOGENOM" id="CLU_000604_1_22_9"/>
<dbReference type="OrthoDB" id="9784332at2"/>
<dbReference type="PhylomeDB" id="A2RI01"/>
<dbReference type="Proteomes" id="UP000000364">
    <property type="component" value="Chromosome"/>
</dbReference>
<dbReference type="GO" id="GO:0043190">
    <property type="term" value="C:ATP-binding cassette (ABC) transporter complex"/>
    <property type="evidence" value="ECO:0007669"/>
    <property type="project" value="TreeGrafter"/>
</dbReference>
<dbReference type="GO" id="GO:0005886">
    <property type="term" value="C:plasma membrane"/>
    <property type="evidence" value="ECO:0000314"/>
    <property type="project" value="UniProtKB"/>
</dbReference>
<dbReference type="GO" id="GO:0005524">
    <property type="term" value="F:ATP binding"/>
    <property type="evidence" value="ECO:0007669"/>
    <property type="project" value="UniProtKB-KW"/>
</dbReference>
<dbReference type="GO" id="GO:0016887">
    <property type="term" value="F:ATP hydrolysis activity"/>
    <property type="evidence" value="ECO:0007669"/>
    <property type="project" value="InterPro"/>
</dbReference>
<dbReference type="GO" id="GO:0042626">
    <property type="term" value="F:ATPase-coupled transmembrane transporter activity"/>
    <property type="evidence" value="ECO:0000314"/>
    <property type="project" value="GO_Central"/>
</dbReference>
<dbReference type="CDD" id="cd03225">
    <property type="entry name" value="ABC_cobalt_CbiO_domain1"/>
    <property type="match status" value="1"/>
</dbReference>
<dbReference type="FunFam" id="3.40.50.300:FF:000224">
    <property type="entry name" value="Energy-coupling factor transporter ATP-binding protein EcfA"/>
    <property type="match status" value="1"/>
</dbReference>
<dbReference type="Gene3D" id="3.40.50.300">
    <property type="entry name" value="P-loop containing nucleotide triphosphate hydrolases"/>
    <property type="match status" value="1"/>
</dbReference>
<dbReference type="InterPro" id="IPR003593">
    <property type="entry name" value="AAA+_ATPase"/>
</dbReference>
<dbReference type="InterPro" id="IPR003439">
    <property type="entry name" value="ABC_transporter-like_ATP-bd"/>
</dbReference>
<dbReference type="InterPro" id="IPR017871">
    <property type="entry name" value="ABC_transporter-like_CS"/>
</dbReference>
<dbReference type="InterPro" id="IPR015856">
    <property type="entry name" value="ABC_transpr_CbiO/EcfA_su"/>
</dbReference>
<dbReference type="InterPro" id="IPR050095">
    <property type="entry name" value="ECF_ABC_transporter_ATP-bd"/>
</dbReference>
<dbReference type="InterPro" id="IPR030947">
    <property type="entry name" value="EcfA_1"/>
</dbReference>
<dbReference type="InterPro" id="IPR027417">
    <property type="entry name" value="P-loop_NTPase"/>
</dbReference>
<dbReference type="NCBIfam" id="TIGR04520">
    <property type="entry name" value="ECF_ATPase_1"/>
    <property type="match status" value="1"/>
</dbReference>
<dbReference type="NCBIfam" id="NF010156">
    <property type="entry name" value="PRK13635.1"/>
    <property type="match status" value="1"/>
</dbReference>
<dbReference type="NCBIfam" id="NF010167">
    <property type="entry name" value="PRK13648.1"/>
    <property type="match status" value="1"/>
</dbReference>
<dbReference type="PANTHER" id="PTHR43553:SF24">
    <property type="entry name" value="ENERGY-COUPLING FACTOR TRANSPORTER ATP-BINDING PROTEIN ECFA1"/>
    <property type="match status" value="1"/>
</dbReference>
<dbReference type="PANTHER" id="PTHR43553">
    <property type="entry name" value="HEAVY METAL TRANSPORTER"/>
    <property type="match status" value="1"/>
</dbReference>
<dbReference type="Pfam" id="PF00005">
    <property type="entry name" value="ABC_tran"/>
    <property type="match status" value="1"/>
</dbReference>
<dbReference type="SMART" id="SM00382">
    <property type="entry name" value="AAA"/>
    <property type="match status" value="1"/>
</dbReference>
<dbReference type="SUPFAM" id="SSF52540">
    <property type="entry name" value="P-loop containing nucleoside triphosphate hydrolases"/>
    <property type="match status" value="1"/>
</dbReference>
<dbReference type="PROSITE" id="PS00211">
    <property type="entry name" value="ABC_TRANSPORTER_1"/>
    <property type="match status" value="1"/>
</dbReference>
<dbReference type="PROSITE" id="PS50893">
    <property type="entry name" value="ABC_TRANSPORTER_2"/>
    <property type="match status" value="1"/>
</dbReference>
<dbReference type="PROSITE" id="PS51246">
    <property type="entry name" value="CBIO"/>
    <property type="match status" value="1"/>
</dbReference>
<proteinExistence type="evidence at protein level"/>
<comment type="function">
    <text evidence="2 3">ATP-binding (A) component of a common energy-coupling factor (ECF) ABC-transporter complex. Unlike classic ABC transporters this ECF transporter provides the energy necessary to transport a number of different substrates. In this organism these probably include biotin, thiamine precursor, niacin, pantothenic acid, queuosine precursor, riboflavin and thiamine. Uptake of niacin or riboflavin into proteosomes containing EcfA1A2T and Niax or RibU has been demonstrated. Uptake requires hydrolyzable Mg-ATP and is substrate-specific; NiaX-containing proteosomes did not transport riboflavin.</text>
</comment>
<comment type="subunit">
    <text evidence="2 3">Forms a stable energy-coupling factor (ECF) transporter complex composed of 2 membrane-embedded substrate-binding proteins (S component), 2 ATP-binding proteins (A component) and 2 transmembrane proteins (T component). In L.lactis forms a stable complex with EcfA' and EcfT and substrate-binding components. In E.coli forms a stable complex with EcfA', EcfT and individually with 3 tested substrate-binding components (BioY, NiaX and ThiT) with a stoichiometry of 1.1:1:1. The core ECF complex interacts with a number of substrate-specific binding components, including BioY, BioY2, HmpT, NiaX, PanT, QueT, RibU and ThiT.</text>
</comment>
<comment type="subcellular location">
    <subcellularLocation>
        <location evidence="4">Cell membrane</location>
        <topology evidence="4">Peripheral membrane protein</topology>
    </subcellularLocation>
</comment>
<comment type="similarity">
    <text evidence="2">Belongs to the ABC transporter superfamily. Energy-coupling factor EcfA family.</text>
</comment>
<organism>
    <name type="scientific">Lactococcus lactis subsp. cremoris (strain MG1363)</name>
    <dbReference type="NCBI Taxonomy" id="416870"/>
    <lineage>
        <taxon>Bacteria</taxon>
        <taxon>Bacillati</taxon>
        <taxon>Bacillota</taxon>
        <taxon>Bacilli</taxon>
        <taxon>Lactobacillales</taxon>
        <taxon>Streptococcaceae</taxon>
        <taxon>Lactococcus</taxon>
        <taxon>Lactococcus cremoris subsp. cremoris</taxon>
    </lineage>
</organism>
<name>ECFA1_LACLM</name>
<feature type="chain" id="PRO_0000287957" description="Energy-coupling factor transporter ATP-binding protein EcfA1">
    <location>
        <begin position="1"/>
        <end position="277"/>
    </location>
</feature>
<feature type="domain" description="ABC transporter" evidence="2">
    <location>
        <begin position="5"/>
        <end position="240"/>
    </location>
</feature>
<feature type="active site" description="Proton acceptor" evidence="1">
    <location>
        <position position="166"/>
    </location>
</feature>
<feature type="binding site" evidence="2">
    <location>
        <begin position="40"/>
        <end position="47"/>
    </location>
    <ligand>
        <name>ATP</name>
        <dbReference type="ChEBI" id="CHEBI:30616"/>
    </ligand>
</feature>
<accession>A2RI01</accession>
<gene>
    <name evidence="2" type="primary">ecfA1</name>
    <name type="synonym">cbiO1</name>
    <name type="synonym">ecfA</name>
    <name type="ordered locus">llmg_0287</name>
</gene>
<protein>
    <recommendedName>
        <fullName evidence="2">Energy-coupling factor transporter ATP-binding protein EcfA1</fullName>
        <shortName evidence="2">ECF transporter A component EcfA</shortName>
        <ecNumber evidence="2">7.-.-.-</ecNumber>
    </recommendedName>
</protein>